<dbReference type="EMBL" id="U00014">
    <property type="protein sequence ID" value="AAA50901.1"/>
    <property type="molecule type" value="Genomic_DNA"/>
</dbReference>
<dbReference type="EMBL" id="AL049191">
    <property type="protein sequence ID" value="CAB39142.1"/>
    <property type="molecule type" value="Genomic_DNA"/>
</dbReference>
<dbReference type="EMBL" id="AL583921">
    <property type="protein sequence ID" value="CAC31557.1"/>
    <property type="molecule type" value="Genomic_DNA"/>
</dbReference>
<dbReference type="PIR" id="S72786">
    <property type="entry name" value="S72786"/>
</dbReference>
<dbReference type="RefSeq" id="NP_301858.1">
    <property type="nucleotide sequence ID" value="NC_002677.1"/>
</dbReference>
<dbReference type="RefSeq" id="WP_010908182.1">
    <property type="nucleotide sequence ID" value="NC_002677.1"/>
</dbReference>
<dbReference type="SMR" id="P54133"/>
<dbReference type="STRING" id="272631.gene:17575006"/>
<dbReference type="KEGG" id="mle:ML1176"/>
<dbReference type="PATRIC" id="fig|272631.5.peg.2133"/>
<dbReference type="Leproma" id="ML1176"/>
<dbReference type="eggNOG" id="ENOG50330UF">
    <property type="taxonomic scope" value="Bacteria"/>
</dbReference>
<dbReference type="HOGENOM" id="CLU_120964_1_2_11"/>
<dbReference type="OrthoDB" id="9342687at2"/>
<dbReference type="Proteomes" id="UP000000806">
    <property type="component" value="Chromosome"/>
</dbReference>
<dbReference type="GO" id="GO:0005886">
    <property type="term" value="C:plasma membrane"/>
    <property type="evidence" value="ECO:0007669"/>
    <property type="project" value="UniProtKB-SubCell"/>
</dbReference>
<dbReference type="InterPro" id="IPR023845">
    <property type="entry name" value="DUF3817_TM"/>
</dbReference>
<dbReference type="NCBIfam" id="TIGR03954">
    <property type="entry name" value="integ_memb_HG"/>
    <property type="match status" value="1"/>
</dbReference>
<dbReference type="PANTHER" id="PTHR40077:SF2">
    <property type="entry name" value="MEMBRANE PROTEIN"/>
    <property type="match status" value="1"/>
</dbReference>
<dbReference type="PANTHER" id="PTHR40077">
    <property type="entry name" value="MEMBRANE PROTEIN-RELATED"/>
    <property type="match status" value="1"/>
</dbReference>
<dbReference type="Pfam" id="PF12823">
    <property type="entry name" value="DUF3817"/>
    <property type="match status" value="1"/>
</dbReference>
<name>Y1176_MYCLE</name>
<feature type="chain" id="PRO_0000103816" description="Uncharacterized protein ML1176">
    <location>
        <begin position="1"/>
        <end position="119"/>
    </location>
</feature>
<feature type="transmembrane region" description="Helical" evidence="1">
    <location>
        <begin position="28"/>
        <end position="48"/>
    </location>
</feature>
<feature type="transmembrane region" description="Helical" evidence="1">
    <location>
        <begin position="55"/>
        <end position="75"/>
    </location>
</feature>
<feature type="transmembrane region" description="Helical" evidence="1">
    <location>
        <begin position="80"/>
        <end position="100"/>
    </location>
</feature>
<organism>
    <name type="scientific">Mycobacterium leprae (strain TN)</name>
    <dbReference type="NCBI Taxonomy" id="272631"/>
    <lineage>
        <taxon>Bacteria</taxon>
        <taxon>Bacillati</taxon>
        <taxon>Actinomycetota</taxon>
        <taxon>Actinomycetes</taxon>
        <taxon>Mycobacteriales</taxon>
        <taxon>Mycobacteriaceae</taxon>
        <taxon>Mycobacterium</taxon>
    </lineage>
</organism>
<reference key="1">
    <citation type="submission" date="1994-09" db="EMBL/GenBank/DDBJ databases">
        <authorList>
            <person name="Smith D.R."/>
            <person name="Robison K."/>
        </authorList>
    </citation>
    <scope>NUCLEOTIDE SEQUENCE [GENOMIC DNA]</scope>
</reference>
<reference key="2">
    <citation type="journal article" date="2001" name="Nature">
        <title>Massive gene decay in the leprosy bacillus.</title>
        <authorList>
            <person name="Cole S.T."/>
            <person name="Eiglmeier K."/>
            <person name="Parkhill J."/>
            <person name="James K.D."/>
            <person name="Thomson N.R."/>
            <person name="Wheeler P.R."/>
            <person name="Honore N."/>
            <person name="Garnier T."/>
            <person name="Churcher C.M."/>
            <person name="Harris D.E."/>
            <person name="Mungall K.L."/>
            <person name="Basham D."/>
            <person name="Brown D."/>
            <person name="Chillingworth T."/>
            <person name="Connor R."/>
            <person name="Davies R.M."/>
            <person name="Devlin K."/>
            <person name="Duthoy S."/>
            <person name="Feltwell T."/>
            <person name="Fraser A."/>
            <person name="Hamlin N."/>
            <person name="Holroyd S."/>
            <person name="Hornsby T."/>
            <person name="Jagels K."/>
            <person name="Lacroix C."/>
            <person name="Maclean J."/>
            <person name="Moule S."/>
            <person name="Murphy L.D."/>
            <person name="Oliver K."/>
            <person name="Quail M.A."/>
            <person name="Rajandream M.A."/>
            <person name="Rutherford K.M."/>
            <person name="Rutter S."/>
            <person name="Seeger K."/>
            <person name="Simon S."/>
            <person name="Simmonds M."/>
            <person name="Skelton J."/>
            <person name="Squares R."/>
            <person name="Squares S."/>
            <person name="Stevens K."/>
            <person name="Taylor K."/>
            <person name="Whitehead S."/>
            <person name="Woodward J.R."/>
            <person name="Barrell B.G."/>
        </authorList>
    </citation>
    <scope>NUCLEOTIDE SEQUENCE [LARGE SCALE GENOMIC DNA]</scope>
    <source>
        <strain>TN</strain>
    </source>
</reference>
<comment type="subcellular location">
    <subcellularLocation>
        <location evidence="2">Cell membrane</location>
        <topology evidence="2">Multi-pass membrane protein</topology>
    </subcellularLocation>
</comment>
<comment type="similarity">
    <text evidence="2">To M.tuberculosis Rv1342c.</text>
</comment>
<evidence type="ECO:0000255" key="1"/>
<evidence type="ECO:0000305" key="2"/>
<gene>
    <name type="ordered locus">ML1176</name>
    <name type="ORF">B1549_F2_59</name>
    <name type="ORF">MLCB1701.02c</name>
</gene>
<proteinExistence type="predicted"/>
<accession>P54133</accession>
<protein>
    <recommendedName>
        <fullName>Uncharacterized protein ML1176</fullName>
    </recommendedName>
</protein>
<sequence>MTRPETPQAPDFDFEKSRTALLGYRIMAWTTGIWLIALCYEIVSHLVFHHEIRWIEVVHGWVYFVYVLTAFNLAIKVRWPIGKTVGVLLAGTVPLLGIIVEHFQTKDVKTRFGLRHSRT</sequence>
<keyword id="KW-1003">Cell membrane</keyword>
<keyword id="KW-0472">Membrane</keyword>
<keyword id="KW-1185">Reference proteome</keyword>
<keyword id="KW-0812">Transmembrane</keyword>
<keyword id="KW-1133">Transmembrane helix</keyword>